<proteinExistence type="evidence at protein level"/>
<feature type="chain" id="PRO_0000332243" description="Maestro heat-like repeat-containing protein family member 2B">
    <location>
        <begin position="1"/>
        <end position="1585"/>
    </location>
</feature>
<feature type="repeat" description="HEAT 1">
    <location>
        <begin position="28"/>
        <end position="65"/>
    </location>
</feature>
<feature type="repeat" description="HEAT 2">
    <location>
        <begin position="228"/>
        <end position="263"/>
    </location>
</feature>
<feature type="repeat" description="HEAT 3">
    <location>
        <begin position="272"/>
        <end position="309"/>
    </location>
</feature>
<feature type="repeat" description="HEAT 4">
    <location>
        <begin position="310"/>
        <end position="346"/>
    </location>
</feature>
<feature type="repeat" description="HEAT 5">
    <location>
        <begin position="405"/>
        <end position="445"/>
    </location>
</feature>
<feature type="repeat" description="HEAT 6">
    <location>
        <begin position="531"/>
        <end position="569"/>
    </location>
</feature>
<feature type="repeat" description="HEAT 7">
    <location>
        <begin position="572"/>
        <end position="611"/>
    </location>
</feature>
<feature type="repeat" description="HEAT 8">
    <location>
        <begin position="662"/>
        <end position="699"/>
    </location>
</feature>
<feature type="repeat" description="HEAT 9">
    <location>
        <begin position="777"/>
        <end position="819"/>
    </location>
</feature>
<feature type="repeat" description="HEAT 10">
    <location>
        <begin position="964"/>
        <end position="1001"/>
    </location>
</feature>
<feature type="repeat" description="HEAT 11">
    <location>
        <begin position="1021"/>
        <end position="1059"/>
    </location>
</feature>
<feature type="repeat" description="HEAT 12">
    <location>
        <begin position="1112"/>
        <end position="1151"/>
    </location>
</feature>
<feature type="repeat" description="HEAT 13">
    <location>
        <begin position="1157"/>
        <end position="1195"/>
    </location>
</feature>
<feature type="repeat" description="HEAT 14">
    <location>
        <begin position="1258"/>
        <end position="1295"/>
    </location>
</feature>
<feature type="repeat" description="HEAT 15">
    <location>
        <begin position="1363"/>
        <end position="1402"/>
    </location>
</feature>
<feature type="splice variant" id="VSP_033361" description="In isoform 2." evidence="6">
    <location>
        <begin position="1"/>
        <end position="296"/>
    </location>
</feature>
<feature type="sequence variant" id="VAR_042983" description="In dbSNP:rs13174484." evidence="3">
    <original>M</original>
    <variation>V</variation>
    <location>
        <position position="11"/>
    </location>
</feature>
<feature type="sequence variant" id="VAR_042984" description="In dbSNP:rs865093." evidence="3">
    <original>W</original>
    <variation>R</variation>
    <location>
        <position position="191"/>
    </location>
</feature>
<feature type="sequence variant" id="VAR_042985" description="In dbSNP:rs10045243.">
    <original>L</original>
    <variation>I</variation>
    <location>
        <position position="263"/>
    </location>
</feature>
<feature type="sequence variant" id="VAR_042986" description="In dbSNP:rs17198125.">
    <original>E</original>
    <variation>V</variation>
    <location>
        <position position="468"/>
    </location>
</feature>
<feature type="sequence variant" id="VAR_042987" description="In dbSNP:rs325864." evidence="3 4">
    <original>V</original>
    <variation>I</variation>
    <location>
        <position position="496"/>
    </location>
</feature>
<feature type="sequence variant" id="VAR_042988" description="In dbSNP:rs13173930." evidence="3 4">
    <original>R</original>
    <variation>H</variation>
    <location>
        <position position="526"/>
    </location>
</feature>
<feature type="sequence variant" id="VAR_042989" description="In dbSNP:rs17854768." evidence="3">
    <original>K</original>
    <variation>N</variation>
    <location>
        <position position="617"/>
    </location>
</feature>
<feature type="sequence variant" id="VAR_042990" description="In dbSNP:rs16870720.">
    <original>D</original>
    <variation>V</variation>
    <location>
        <position position="648"/>
    </location>
</feature>
<feature type="sequence variant" id="VAR_042991" description="In dbSNP:rs10067611.">
    <original>M</original>
    <variation>V</variation>
    <location>
        <position position="781"/>
    </location>
</feature>
<feature type="sequence variant" id="VAR_042992" description="In dbSNP:rs10054110.">
    <original>N</original>
    <variation>K</variation>
    <location>
        <position position="918"/>
    </location>
</feature>
<feature type="sequence variant" id="VAR_042993" description="In dbSNP:rs2271704." evidence="2 3 4 5">
    <original>L</original>
    <variation>P</variation>
    <location>
        <position position="1179"/>
    </location>
</feature>
<feature type="sequence conflict" description="In Ref. 1; CAH18199." evidence="7" ref="1">
    <original>A</original>
    <variation>V</variation>
    <location>
        <position position="624"/>
    </location>
</feature>
<feature type="sequence conflict" description="In Ref. 4; BAC05103." evidence="7" ref="4">
    <original>L</original>
    <variation>P</variation>
    <location>
        <position position="897"/>
    </location>
</feature>
<feature type="sequence conflict" description="In Ref. 5; AAP97306." evidence="7" ref="5">
    <original>V</original>
    <variation>L</variation>
    <location>
        <position position="1059"/>
    </location>
</feature>
<feature type="sequence conflict" description="In Ref. 5; AAP97306." evidence="7" ref="5">
    <original>E</original>
    <variation>D</variation>
    <location>
        <position position="1072"/>
    </location>
</feature>
<feature type="sequence conflict" description="In Ref. 1; CAH18199 and 5; AAP97306." evidence="7" ref="1 5">
    <original>I</original>
    <variation>T</variation>
    <location>
        <position position="1424"/>
    </location>
</feature>
<keyword id="KW-0025">Alternative splicing</keyword>
<keyword id="KW-0966">Cell projection</keyword>
<keyword id="KW-0969">Cilium</keyword>
<keyword id="KW-0963">Cytoplasm</keyword>
<keyword id="KW-0968">Cytoplasmic vesicle</keyword>
<keyword id="KW-0221">Differentiation</keyword>
<keyword id="KW-0282">Flagellum</keyword>
<keyword id="KW-1267">Proteomics identification</keyword>
<keyword id="KW-1185">Reference proteome</keyword>
<keyword id="KW-0677">Repeat</keyword>
<keyword id="KW-0744">Spermatogenesis</keyword>
<protein>
    <recommendedName>
        <fullName evidence="8">Maestro heat-like repeat-containing protein family member 2B</fullName>
    </recommendedName>
    <alternativeName>
        <fullName>HEAT repeat-containing protein 7B2</fullName>
    </alternativeName>
    <alternativeName>
        <fullName evidence="1">Sperm PKA-interacting factor</fullName>
        <shortName evidence="1">SPIF</shortName>
    </alternativeName>
</protein>
<dbReference type="EMBL" id="CR749346">
    <property type="protein sequence ID" value="CAH18199.1"/>
    <property type="molecule type" value="mRNA"/>
</dbReference>
<dbReference type="EMBL" id="AC114967">
    <property type="status" value="NOT_ANNOTATED_CDS"/>
    <property type="molecule type" value="Genomic_DNA"/>
</dbReference>
<dbReference type="EMBL" id="BC052962">
    <property type="protein sequence ID" value="AAH52962.1"/>
    <property type="molecule type" value="mRNA"/>
</dbReference>
<dbReference type="EMBL" id="AK097562">
    <property type="protein sequence ID" value="BAC05103.1"/>
    <property type="status" value="ALT_INIT"/>
    <property type="molecule type" value="mRNA"/>
</dbReference>
<dbReference type="EMBL" id="AF432068">
    <property type="protein sequence ID" value="AAP97306.1"/>
    <property type="status" value="ALT_FRAME"/>
    <property type="molecule type" value="mRNA"/>
</dbReference>
<dbReference type="CCDS" id="CCDS47202.1">
    <molecule id="Q7Z745-1"/>
</dbReference>
<dbReference type="RefSeq" id="NP_775760.3">
    <molecule id="Q7Z745-1"/>
    <property type="nucleotide sequence ID" value="NM_173489.4"/>
</dbReference>
<dbReference type="BioGRID" id="126362">
    <property type="interactions" value="7"/>
</dbReference>
<dbReference type="FunCoup" id="Q7Z745">
    <property type="interactions" value="12"/>
</dbReference>
<dbReference type="IntAct" id="Q7Z745">
    <property type="interactions" value="3"/>
</dbReference>
<dbReference type="STRING" id="9606.ENSP00000382476"/>
<dbReference type="iPTMnet" id="Q7Z745"/>
<dbReference type="PhosphoSitePlus" id="Q7Z745"/>
<dbReference type="BioMuta" id="MROH2B"/>
<dbReference type="DMDM" id="296453066"/>
<dbReference type="jPOST" id="Q7Z745"/>
<dbReference type="MassIVE" id="Q7Z745"/>
<dbReference type="PaxDb" id="9606-ENSP00000382476"/>
<dbReference type="PeptideAtlas" id="Q7Z745"/>
<dbReference type="ProteomicsDB" id="69484">
    <molecule id="Q7Z745-1"/>
</dbReference>
<dbReference type="ProteomicsDB" id="69485">
    <molecule id="Q7Z745-2"/>
</dbReference>
<dbReference type="Antibodypedia" id="56251">
    <property type="antibodies" value="17 antibodies from 5 providers"/>
</dbReference>
<dbReference type="DNASU" id="133558"/>
<dbReference type="Ensembl" id="ENST00000399564.5">
    <molecule id="Q7Z745-1"/>
    <property type="protein sequence ID" value="ENSP00000382476.4"/>
    <property type="gene ID" value="ENSG00000171495.17"/>
</dbReference>
<dbReference type="GeneID" id="133558"/>
<dbReference type="KEGG" id="hsa:133558"/>
<dbReference type="MANE-Select" id="ENST00000399564.5">
    <property type="protein sequence ID" value="ENSP00000382476.4"/>
    <property type="RefSeq nucleotide sequence ID" value="NM_173489.5"/>
    <property type="RefSeq protein sequence ID" value="NP_775760.3"/>
</dbReference>
<dbReference type="UCSC" id="uc003jmj.5">
    <molecule id="Q7Z745-1"/>
    <property type="organism name" value="human"/>
</dbReference>
<dbReference type="AGR" id="HGNC:26857"/>
<dbReference type="CTD" id="133558"/>
<dbReference type="GeneCards" id="MROH2B"/>
<dbReference type="HGNC" id="HGNC:26857">
    <property type="gene designation" value="MROH2B"/>
</dbReference>
<dbReference type="HPA" id="ENSG00000171495">
    <property type="expression patterns" value="Tissue enriched (testis)"/>
</dbReference>
<dbReference type="MIM" id="620930">
    <property type="type" value="gene"/>
</dbReference>
<dbReference type="neXtProt" id="NX_Q7Z745"/>
<dbReference type="OpenTargets" id="ENSG00000171495"/>
<dbReference type="PharmGKB" id="PA164720440"/>
<dbReference type="VEuPathDB" id="HostDB:ENSG00000171495"/>
<dbReference type="eggNOG" id="KOG2032">
    <property type="taxonomic scope" value="Eukaryota"/>
</dbReference>
<dbReference type="GeneTree" id="ENSGT00940000161231"/>
<dbReference type="HOGENOM" id="CLU_003168_1_0_1"/>
<dbReference type="InParanoid" id="Q7Z745"/>
<dbReference type="OMA" id="HREDFCE"/>
<dbReference type="OrthoDB" id="1884734at2759"/>
<dbReference type="PAN-GO" id="Q7Z745">
    <property type="GO annotations" value="2 GO annotations based on evolutionary models"/>
</dbReference>
<dbReference type="PhylomeDB" id="Q7Z745"/>
<dbReference type="TreeFam" id="TF315201"/>
<dbReference type="PathwayCommons" id="Q7Z745"/>
<dbReference type="SignaLink" id="Q7Z745"/>
<dbReference type="BioGRID-ORCS" id="133558">
    <property type="hits" value="6 hits in 1140 CRISPR screens"/>
</dbReference>
<dbReference type="GenomeRNAi" id="133558"/>
<dbReference type="Pharos" id="Q7Z745">
    <property type="development level" value="Tdark"/>
</dbReference>
<dbReference type="PRO" id="PR:Q7Z745"/>
<dbReference type="Proteomes" id="UP000005640">
    <property type="component" value="Chromosome 5"/>
</dbReference>
<dbReference type="RNAct" id="Q7Z745">
    <property type="molecule type" value="protein"/>
</dbReference>
<dbReference type="Bgee" id="ENSG00000171495">
    <property type="expression patterns" value="Expressed in sperm and 76 other cell types or tissues"/>
</dbReference>
<dbReference type="ExpressionAtlas" id="Q7Z745">
    <property type="expression patterns" value="baseline and differential"/>
</dbReference>
<dbReference type="GO" id="GO:0001669">
    <property type="term" value="C:acrosomal vesicle"/>
    <property type="evidence" value="ECO:0000250"/>
    <property type="project" value="UniProtKB"/>
</dbReference>
<dbReference type="GO" id="GO:0005737">
    <property type="term" value="C:cytoplasm"/>
    <property type="evidence" value="ECO:0000250"/>
    <property type="project" value="UniProtKB"/>
</dbReference>
<dbReference type="GO" id="GO:0036126">
    <property type="term" value="C:sperm flagellum"/>
    <property type="evidence" value="ECO:0000250"/>
    <property type="project" value="UniProtKB"/>
</dbReference>
<dbReference type="GO" id="GO:0097225">
    <property type="term" value="C:sperm midpiece"/>
    <property type="evidence" value="ECO:0000250"/>
    <property type="project" value="UniProtKB"/>
</dbReference>
<dbReference type="GO" id="GO:0030154">
    <property type="term" value="P:cell differentiation"/>
    <property type="evidence" value="ECO:0007669"/>
    <property type="project" value="UniProtKB-KW"/>
</dbReference>
<dbReference type="GO" id="GO:0010737">
    <property type="term" value="P:protein kinase A signaling"/>
    <property type="evidence" value="ECO:0000250"/>
    <property type="project" value="UniProtKB"/>
</dbReference>
<dbReference type="GO" id="GO:0007283">
    <property type="term" value="P:spermatogenesis"/>
    <property type="evidence" value="ECO:0007669"/>
    <property type="project" value="UniProtKB-KW"/>
</dbReference>
<dbReference type="FunFam" id="1.25.10.10:FF:000841">
    <property type="entry name" value="Maestro heat like repeat family member 2B"/>
    <property type="match status" value="1"/>
</dbReference>
<dbReference type="Gene3D" id="1.25.10.10">
    <property type="entry name" value="Leucine-rich Repeat Variant"/>
    <property type="match status" value="1"/>
</dbReference>
<dbReference type="InterPro" id="IPR011989">
    <property type="entry name" value="ARM-like"/>
</dbReference>
<dbReference type="InterPro" id="IPR016024">
    <property type="entry name" value="ARM-type_fold"/>
</dbReference>
<dbReference type="InterPro" id="IPR055406">
    <property type="entry name" value="HEAT_Maestro"/>
</dbReference>
<dbReference type="InterPro" id="IPR055408">
    <property type="entry name" value="HEAT_MROH2B-like"/>
</dbReference>
<dbReference type="InterPro" id="IPR048465">
    <property type="entry name" value="Maestro-like_HEAT"/>
</dbReference>
<dbReference type="InterPro" id="IPR045206">
    <property type="entry name" value="Maestro_heat-like_prot"/>
</dbReference>
<dbReference type="InterPro" id="IPR056282">
    <property type="entry name" value="MROH2B-like_N_HEAT"/>
</dbReference>
<dbReference type="PANTHER" id="PTHR23120:SF22">
    <property type="entry name" value="MAESTRO HEAT-LIKE REPEAT-CONTAINING PROTEIN FAMILY MEMBER 2B"/>
    <property type="match status" value="1"/>
</dbReference>
<dbReference type="PANTHER" id="PTHR23120">
    <property type="entry name" value="MAESTRO-RELATED HEAT DOMAIN-CONTAINING"/>
    <property type="match status" value="1"/>
</dbReference>
<dbReference type="Pfam" id="PF21047">
    <property type="entry name" value="HEAT_Maestro"/>
    <property type="match status" value="1"/>
</dbReference>
<dbReference type="Pfam" id="PF23210">
    <property type="entry name" value="HEAT_Maestro_2"/>
    <property type="match status" value="1"/>
</dbReference>
<dbReference type="Pfam" id="PF23221">
    <property type="entry name" value="HEAT_MROH2B_1st"/>
    <property type="match status" value="1"/>
</dbReference>
<dbReference type="Pfam" id="PF23227">
    <property type="entry name" value="HEAT_MROH2B_C"/>
    <property type="match status" value="1"/>
</dbReference>
<dbReference type="SUPFAM" id="SSF48371">
    <property type="entry name" value="ARM repeat"/>
    <property type="match status" value="2"/>
</dbReference>
<accession>Q7Z745</accession>
<accession>Q68DM1</accession>
<accession>Q7Z4U4</accession>
<accession>Q8N7X3</accession>
<organism>
    <name type="scientific">Homo sapiens</name>
    <name type="common">Human</name>
    <dbReference type="NCBI Taxonomy" id="9606"/>
    <lineage>
        <taxon>Eukaryota</taxon>
        <taxon>Metazoa</taxon>
        <taxon>Chordata</taxon>
        <taxon>Craniata</taxon>
        <taxon>Vertebrata</taxon>
        <taxon>Euteleostomi</taxon>
        <taxon>Mammalia</taxon>
        <taxon>Eutheria</taxon>
        <taxon>Euarchontoglires</taxon>
        <taxon>Primates</taxon>
        <taxon>Haplorrhini</taxon>
        <taxon>Catarrhini</taxon>
        <taxon>Hominidae</taxon>
        <taxon>Homo</taxon>
    </lineage>
</organism>
<evidence type="ECO:0000250" key="1">
    <source>
        <dbReference type="UniProtKB" id="Q7M6Y6"/>
    </source>
</evidence>
<evidence type="ECO:0000269" key="2">
    <source>
    </source>
</evidence>
<evidence type="ECO:0000269" key="3">
    <source>
    </source>
</evidence>
<evidence type="ECO:0000269" key="4">
    <source>
    </source>
</evidence>
<evidence type="ECO:0000269" key="5">
    <source ref="5"/>
</evidence>
<evidence type="ECO:0000303" key="6">
    <source>
    </source>
</evidence>
<evidence type="ECO:0000305" key="7"/>
<evidence type="ECO:0000312" key="8">
    <source>
        <dbReference type="HGNC" id="HGNC:26857"/>
    </source>
</evidence>
<sequence length="1585" mass="180781">MTLSTEESIEMFGDINLTLGMLNKEDIVNKEDIYSHLTSVIQNTDILDDAIVQRLIYYASKDMRDNNMLREIRMLAGEVLVSLAAHDFNSVMYEVQSNFRILELPDEFVVLALAELATSYVSQSIPFMMMTLLTMQTMLRLAEDERMKGTFCIALEKFSKAIYKYVNHWRDFPYPRLDANRLSDKIFMLFWYIMEKWAPLASPMQTLSIVKAHGPTVSLLLHREDFRGYALGQVPWLLNQYKDKEIDFHVTQSLKQILTAAVLYDIGLPRSLRRSIFINLLQQICRAPEPPVKENEMKASSCFLILAHSNPGELMEFFDEQVRSNNEAIRVGILTLLRLAVNADEPRLRDHIISIERTVKIVMGDLSTKVRNSVLLLIQTMCEKSYIEAREGWPLIDYVFSQFATLNRNLEKPVKTNFHENEKEEESVRETSLEVLKTLDPLVIGMPQVLWPRILTFVVPAEYTEALEPLFSIIRILIMAEEKKQHSAKESTALVVSTGAVKLPSPQQLLARLLVISMPASLGELRGAGAIGLLKILPEIIHPKLVDLWKTRLPELLQPLEGKNISTVLWETMLLQLLKESLWKISDVAWTIQLTQDFKQQMGSYSNNSTEKKFLWKALGTTLACCQDSDFVNSQIKEFLTAPNQLGDQRQGITSILGYCAENHLDIVLKVLKTFQNQEKFFMNRCKSLFSGKKSLTKTDVMVIYGAVALHAPKKQLLSRLNQDIISQVLSLHGQCSQVLGMSVMNKDMDLQMSFTRSITEIGIAVQDAEDQGFQFSYKEMLIGYMLDFIRDEPLDSLASPIRWKALIAIRYLSKLKPQLSLQDHLNILEENIRRLLPLPPLENLKSEGQTDKDKEHIQFLYERSMDALGKLLKTMMWDNVNAEDCQEMFNLLQMWLVSQKEWERERAFQITAKVLTNDIEAPENFKIGSLLGLLAPHSCDTLPTIRQAAASSTIGLFYIKGIHLEVERLQGLQEGLESDDVQVQIKISSKIAKIVSKFIPNEEILMFLEEMLDGLESLNPTCTKACGIWMITVLKQQGAALEDQLLEILGTIYHHMPVLRQKEESFQFILEAISQIASFHMDTVVVNLLQKPLPFDRDTKTLWKALAEKPASSGKLLQALIDKLETELEDDIARVEAISVACAMYEVISMGTSVTGLYPELFTLLLKLVSCTLGQKMLTCPWSHRRHVMQQGEQQQIPDPCRLSTATLKCLQAQAMREGLAKESDEGDNLWTLLSSPSTHHIGVCSLARSMAVWQHGVILDIMEQLLSSLTSSSENYRITGAAFFSELMKEPILWKHGNLRNVLILMDQSAWDSNATLRQMAIRGLGNTASGAPHKVKKHKQLMLESIIRGLYHLARTEVVCESLKALKKILELLTDRDVSFYFKEIVLQTRTFFEDEQDDVRLTAIFLFEDLAPLTGRRWKIFFAEEIKKSLISFLLHLWDPNPKIGVACRDVLMVCIPFLGLQELYGVLDRLLDQDLPRARDFYRQFCVKLAKKNQEILWILHTHSFTFFTSTWEVIRSAAVKLTDAVVLNLTSQYVELLDREQLTTRLQALRQDPCISVQRAAEAALQTLLRRCKETSIPL</sequence>
<reference key="1">
    <citation type="journal article" date="2007" name="BMC Genomics">
        <title>The full-ORF clone resource of the German cDNA consortium.</title>
        <authorList>
            <person name="Bechtel S."/>
            <person name="Rosenfelder H."/>
            <person name="Duda A."/>
            <person name="Schmidt C.P."/>
            <person name="Ernst U."/>
            <person name="Wellenreuther R."/>
            <person name="Mehrle A."/>
            <person name="Schuster C."/>
            <person name="Bahr A."/>
            <person name="Bloecker H."/>
            <person name="Heubner D."/>
            <person name="Hoerlein A."/>
            <person name="Michel G."/>
            <person name="Wedler H."/>
            <person name="Koehrer K."/>
            <person name="Ottenwaelder B."/>
            <person name="Poustka A."/>
            <person name="Wiemann S."/>
            <person name="Schupp I."/>
        </authorList>
    </citation>
    <scope>NUCLEOTIDE SEQUENCE [LARGE SCALE MRNA] (ISOFORM 2)</scope>
    <scope>VARIANTS ILE-496; HIS-526 AND PRO-1179</scope>
    <source>
        <tissue>Testis</tissue>
    </source>
</reference>
<reference key="2">
    <citation type="journal article" date="2004" name="Nature">
        <title>The DNA sequence and comparative analysis of human chromosome 5.</title>
        <authorList>
            <person name="Schmutz J."/>
            <person name="Martin J."/>
            <person name="Terry A."/>
            <person name="Couronne O."/>
            <person name="Grimwood J."/>
            <person name="Lowry S."/>
            <person name="Gordon L.A."/>
            <person name="Scott D."/>
            <person name="Xie G."/>
            <person name="Huang W."/>
            <person name="Hellsten U."/>
            <person name="Tran-Gyamfi M."/>
            <person name="She X."/>
            <person name="Prabhakar S."/>
            <person name="Aerts A."/>
            <person name="Altherr M."/>
            <person name="Bajorek E."/>
            <person name="Black S."/>
            <person name="Branscomb E."/>
            <person name="Caoile C."/>
            <person name="Challacombe J.F."/>
            <person name="Chan Y.M."/>
            <person name="Denys M."/>
            <person name="Detter J.C."/>
            <person name="Escobar J."/>
            <person name="Flowers D."/>
            <person name="Fotopulos D."/>
            <person name="Glavina T."/>
            <person name="Gomez M."/>
            <person name="Gonzales E."/>
            <person name="Goodstein D."/>
            <person name="Grigoriev I."/>
            <person name="Groza M."/>
            <person name="Hammon N."/>
            <person name="Hawkins T."/>
            <person name="Haydu L."/>
            <person name="Israni S."/>
            <person name="Jett J."/>
            <person name="Kadner K."/>
            <person name="Kimball H."/>
            <person name="Kobayashi A."/>
            <person name="Lopez F."/>
            <person name="Lou Y."/>
            <person name="Martinez D."/>
            <person name="Medina C."/>
            <person name="Morgan J."/>
            <person name="Nandkeshwar R."/>
            <person name="Noonan J.P."/>
            <person name="Pitluck S."/>
            <person name="Pollard M."/>
            <person name="Predki P."/>
            <person name="Priest J."/>
            <person name="Ramirez L."/>
            <person name="Retterer J."/>
            <person name="Rodriguez A."/>
            <person name="Rogers S."/>
            <person name="Salamov A."/>
            <person name="Salazar A."/>
            <person name="Thayer N."/>
            <person name="Tice H."/>
            <person name="Tsai M."/>
            <person name="Ustaszewska A."/>
            <person name="Vo N."/>
            <person name="Wheeler J."/>
            <person name="Wu K."/>
            <person name="Yang J."/>
            <person name="Dickson M."/>
            <person name="Cheng J.-F."/>
            <person name="Eichler E.E."/>
            <person name="Olsen A."/>
            <person name="Pennacchio L.A."/>
            <person name="Rokhsar D.S."/>
            <person name="Richardson P."/>
            <person name="Lucas S.M."/>
            <person name="Myers R.M."/>
            <person name="Rubin E.M."/>
        </authorList>
    </citation>
    <scope>NUCLEOTIDE SEQUENCE [LARGE SCALE GENOMIC DNA]</scope>
</reference>
<reference key="3">
    <citation type="journal article" date="2004" name="Genome Res.">
        <title>The status, quality, and expansion of the NIH full-length cDNA project: the Mammalian Gene Collection (MGC).</title>
        <authorList>
            <consortium name="The MGC Project Team"/>
        </authorList>
    </citation>
    <scope>NUCLEOTIDE SEQUENCE [LARGE SCALE MRNA] (ISOFORM 1)</scope>
    <scope>VARIANTS VAL-11; ARG-191; ILE-496; HIS-526; ASN-617 AND PRO-1179</scope>
    <source>
        <tissue>Testis</tissue>
    </source>
</reference>
<reference key="4">
    <citation type="journal article" date="2004" name="Nat. Genet.">
        <title>Complete sequencing and characterization of 21,243 full-length human cDNAs.</title>
        <authorList>
            <person name="Ota T."/>
            <person name="Suzuki Y."/>
            <person name="Nishikawa T."/>
            <person name="Otsuki T."/>
            <person name="Sugiyama T."/>
            <person name="Irie R."/>
            <person name="Wakamatsu A."/>
            <person name="Hayashi K."/>
            <person name="Sato H."/>
            <person name="Nagai K."/>
            <person name="Kimura K."/>
            <person name="Makita H."/>
            <person name="Sekine M."/>
            <person name="Obayashi M."/>
            <person name="Nishi T."/>
            <person name="Shibahara T."/>
            <person name="Tanaka T."/>
            <person name="Ishii S."/>
            <person name="Yamamoto J."/>
            <person name="Saito K."/>
            <person name="Kawai Y."/>
            <person name="Isono Y."/>
            <person name="Nakamura Y."/>
            <person name="Nagahari K."/>
            <person name="Murakami K."/>
            <person name="Yasuda T."/>
            <person name="Iwayanagi T."/>
            <person name="Wagatsuma M."/>
            <person name="Shiratori A."/>
            <person name="Sudo H."/>
            <person name="Hosoiri T."/>
            <person name="Kaku Y."/>
            <person name="Kodaira H."/>
            <person name="Kondo H."/>
            <person name="Sugawara M."/>
            <person name="Takahashi M."/>
            <person name="Kanda K."/>
            <person name="Yokoi T."/>
            <person name="Furuya T."/>
            <person name="Kikkawa E."/>
            <person name="Omura Y."/>
            <person name="Abe K."/>
            <person name="Kamihara K."/>
            <person name="Katsuta N."/>
            <person name="Sato K."/>
            <person name="Tanikawa M."/>
            <person name="Yamazaki M."/>
            <person name="Ninomiya K."/>
            <person name="Ishibashi T."/>
            <person name="Yamashita H."/>
            <person name="Murakawa K."/>
            <person name="Fujimori K."/>
            <person name="Tanai H."/>
            <person name="Kimata M."/>
            <person name="Watanabe M."/>
            <person name="Hiraoka S."/>
            <person name="Chiba Y."/>
            <person name="Ishida S."/>
            <person name="Ono Y."/>
            <person name="Takiguchi S."/>
            <person name="Watanabe S."/>
            <person name="Yosida M."/>
            <person name="Hotuta T."/>
            <person name="Kusano J."/>
            <person name="Kanehori K."/>
            <person name="Takahashi-Fujii A."/>
            <person name="Hara H."/>
            <person name="Tanase T.-O."/>
            <person name="Nomura Y."/>
            <person name="Togiya S."/>
            <person name="Komai F."/>
            <person name="Hara R."/>
            <person name="Takeuchi K."/>
            <person name="Arita M."/>
            <person name="Imose N."/>
            <person name="Musashino K."/>
            <person name="Yuuki H."/>
            <person name="Oshima A."/>
            <person name="Sasaki N."/>
            <person name="Aotsuka S."/>
            <person name="Yoshikawa Y."/>
            <person name="Matsunawa H."/>
            <person name="Ichihara T."/>
            <person name="Shiohata N."/>
            <person name="Sano S."/>
            <person name="Moriya S."/>
            <person name="Momiyama H."/>
            <person name="Satoh N."/>
            <person name="Takami S."/>
            <person name="Terashima Y."/>
            <person name="Suzuki O."/>
            <person name="Nakagawa S."/>
            <person name="Senoh A."/>
            <person name="Mizoguchi H."/>
            <person name="Goto Y."/>
            <person name="Shimizu F."/>
            <person name="Wakebe H."/>
            <person name="Hishigaki H."/>
            <person name="Watanabe T."/>
            <person name="Sugiyama A."/>
            <person name="Takemoto M."/>
            <person name="Kawakami B."/>
            <person name="Yamazaki M."/>
            <person name="Watanabe K."/>
            <person name="Kumagai A."/>
            <person name="Itakura S."/>
            <person name="Fukuzumi Y."/>
            <person name="Fujimori Y."/>
            <person name="Komiyama M."/>
            <person name="Tashiro H."/>
            <person name="Tanigami A."/>
            <person name="Fujiwara T."/>
            <person name="Ono T."/>
            <person name="Yamada K."/>
            <person name="Fujii Y."/>
            <person name="Ozaki K."/>
            <person name="Hirao M."/>
            <person name="Ohmori Y."/>
            <person name="Kawabata A."/>
            <person name="Hikiji T."/>
            <person name="Kobatake N."/>
            <person name="Inagaki H."/>
            <person name="Ikema Y."/>
            <person name="Okamoto S."/>
            <person name="Okitani R."/>
            <person name="Kawakami T."/>
            <person name="Noguchi S."/>
            <person name="Itoh T."/>
            <person name="Shigeta K."/>
            <person name="Senba T."/>
            <person name="Matsumura K."/>
            <person name="Nakajima Y."/>
            <person name="Mizuno T."/>
            <person name="Morinaga M."/>
            <person name="Sasaki M."/>
            <person name="Togashi T."/>
            <person name="Oyama M."/>
            <person name="Hata H."/>
            <person name="Watanabe M."/>
            <person name="Komatsu T."/>
            <person name="Mizushima-Sugano J."/>
            <person name="Satoh T."/>
            <person name="Shirai Y."/>
            <person name="Takahashi Y."/>
            <person name="Nakagawa K."/>
            <person name="Okumura K."/>
            <person name="Nagase T."/>
            <person name="Nomura N."/>
            <person name="Kikuchi H."/>
            <person name="Masuho Y."/>
            <person name="Yamashita R."/>
            <person name="Nakai K."/>
            <person name="Yada T."/>
            <person name="Nakamura Y."/>
            <person name="Ohara O."/>
            <person name="Isogai T."/>
            <person name="Sugano S."/>
        </authorList>
    </citation>
    <scope>NUCLEOTIDE SEQUENCE [LARGE SCALE MRNA] OF 823-1585 (ISOFORM 1)</scope>
    <scope>VARIANT PRO-1179</scope>
    <source>
        <tissue>Testis</tissue>
    </source>
</reference>
<reference key="5">
    <citation type="submission" date="2001-10" db="EMBL/GenBank/DDBJ databases">
        <authorList>
            <person name="Guo J.H."/>
            <person name="Yu L."/>
        </authorList>
    </citation>
    <scope>NUCLEOTIDE SEQUENCE [LARGE SCALE MRNA] OF 1049-1585 (ISOFORM 1)</scope>
    <scope>VARIANT PRO-1179</scope>
</reference>
<gene>
    <name evidence="8" type="primary">MROH2B</name>
    <name type="synonym">HEATR7B2</name>
</gene>
<comment type="function">
    <text evidence="1">May play a role in the process of sperm capacitation.</text>
</comment>
<comment type="subunit">
    <text evidence="1">Found in a complex at least composed of MROH2B, PRKACA isoform 2 and TCP11. Interacts with PRKACA. Interacts with TCP11.</text>
</comment>
<comment type="subcellular location">
    <subcellularLocation>
        <location evidence="1">Cytoplasm</location>
    </subcellularLocation>
    <subcellularLocation>
        <location evidence="1">Cytoplasmic vesicle</location>
        <location evidence="1">Secretory vesicle</location>
        <location evidence="1">Acrosome</location>
    </subcellularLocation>
    <subcellularLocation>
        <location evidence="1">Cell projection</location>
        <location evidence="1">Cilium</location>
        <location evidence="1">Flagellum</location>
    </subcellularLocation>
    <text evidence="1">Colocalizes with PRKACA and TCP11 on the acrosome and tail regions in round spermatids and spermatozoa regardless of the capacitation status of the sperm.</text>
</comment>
<comment type="alternative products">
    <event type="alternative splicing"/>
    <isoform>
        <id>Q7Z745-1</id>
        <name>1</name>
        <sequence type="displayed"/>
    </isoform>
    <isoform>
        <id>Q7Z745-2</id>
        <name>2</name>
        <sequence type="described" ref="VSP_033361"/>
    </isoform>
</comment>
<comment type="PTM">
    <text evidence="1">Constitutively phosphorylated on serine and threonine residues in acrosomal region of the sperm head, midpiece and flagellar regions of noncapacitated spermatozoa. Phosphorylation on tyrosine residues increases upon sperm capacitation within the acrosomal and tail regions in a protein kinase A (PKA)-dependent signaling pathway.</text>
</comment>
<comment type="sequence caution" evidence="7">
    <conflict type="frameshift">
        <sequence resource="EMBL-CDS" id="AAP97306"/>
    </conflict>
</comment>
<comment type="sequence caution" evidence="7">
    <conflict type="erroneous initiation">
        <sequence resource="EMBL-CDS" id="BAC05103"/>
    </conflict>
    <text>Truncated N-terminus.</text>
</comment>
<name>MRO2B_HUMAN</name>